<name>H8_NEIMB</name>
<evidence type="ECO:0000250" key="1"/>
<evidence type="ECO:0000255" key="2">
    <source>
        <dbReference type="PROSITE-ProRule" id="PRU00303"/>
    </source>
</evidence>
<evidence type="ECO:0000256" key="3">
    <source>
        <dbReference type="SAM" id="MobiDB-lite"/>
    </source>
</evidence>
<organism>
    <name type="scientific">Neisseria meningitidis serogroup B (strain ATCC BAA-335 / MC58)</name>
    <dbReference type="NCBI Taxonomy" id="122586"/>
    <lineage>
        <taxon>Bacteria</taxon>
        <taxon>Pseudomonadati</taxon>
        <taxon>Pseudomonadota</taxon>
        <taxon>Betaproteobacteria</taxon>
        <taxon>Neisseriales</taxon>
        <taxon>Neisseriaceae</taxon>
        <taxon>Neisseria</taxon>
    </lineage>
</organism>
<protein>
    <recommendedName>
        <fullName>Outer membrane protein H.8</fullName>
    </recommendedName>
</protein>
<feature type="signal peptide" evidence="2">
    <location>
        <begin position="1"/>
        <end position="17"/>
    </location>
</feature>
<feature type="chain" id="PRO_0000002855" description="Outer membrane protein H.8">
    <location>
        <begin position="18"/>
        <end position="183"/>
    </location>
</feature>
<feature type="domain" description="Plastocyanin-like">
    <location>
        <begin position="57"/>
        <end position="183"/>
    </location>
</feature>
<feature type="region of interest" description="Disordered" evidence="3">
    <location>
        <begin position="27"/>
        <end position="51"/>
    </location>
</feature>
<feature type="binding site" evidence="1">
    <location>
        <position position="102"/>
    </location>
    <ligand>
        <name>Cu cation</name>
        <dbReference type="ChEBI" id="CHEBI:23378"/>
    </ligand>
</feature>
<feature type="binding site" evidence="1">
    <location>
        <position position="166"/>
    </location>
    <ligand>
        <name>Cu cation</name>
        <dbReference type="ChEBI" id="CHEBI:23378"/>
    </ligand>
</feature>
<feature type="binding site" evidence="1">
    <location>
        <position position="171"/>
    </location>
    <ligand>
        <name>Cu cation</name>
        <dbReference type="ChEBI" id="CHEBI:23378"/>
    </ligand>
</feature>
<feature type="binding site" evidence="1">
    <location>
        <position position="175"/>
    </location>
    <ligand>
        <name>Cu cation</name>
        <dbReference type="ChEBI" id="CHEBI:23378"/>
    </ligand>
</feature>
<feature type="lipid moiety-binding region" description="N-palmitoyl cysteine" evidence="2">
    <location>
        <position position="18"/>
    </location>
</feature>
<feature type="lipid moiety-binding region" description="S-diacylglycerol cysteine" evidence="2">
    <location>
        <position position="18"/>
    </location>
</feature>
<proteinExistence type="inferred from homology"/>
<comment type="cofactor">
    <cofactor evidence="1">
        <name>Cu cation</name>
        <dbReference type="ChEBI" id="CHEBI:23378"/>
    </cofactor>
    <text evidence="1">Binds 1 copper ion per subunit.</text>
</comment>
<comment type="subcellular location">
    <subcellularLocation>
        <location evidence="1">Cell outer membrane</location>
        <topology evidence="2">Lipid-anchor</topology>
    </subcellularLocation>
</comment>
<keyword id="KW-0998">Cell outer membrane</keyword>
<keyword id="KW-0186">Copper</keyword>
<keyword id="KW-0249">Electron transport</keyword>
<keyword id="KW-0449">Lipoprotein</keyword>
<keyword id="KW-0472">Membrane</keyword>
<keyword id="KW-0479">Metal-binding</keyword>
<keyword id="KW-0564">Palmitate</keyword>
<keyword id="KW-1185">Reference proteome</keyword>
<keyword id="KW-0732">Signal</keyword>
<keyword id="KW-0813">Transport</keyword>
<accession>P57026</accession>
<dbReference type="EMBL" id="AE002098">
    <property type="protein sequence ID" value="AAF41888.1"/>
    <property type="molecule type" value="Genomic_DNA"/>
</dbReference>
<dbReference type="PIR" id="A81072">
    <property type="entry name" value="A81072"/>
</dbReference>
<dbReference type="RefSeq" id="NP_274540.1">
    <property type="nucleotide sequence ID" value="NC_003112.2"/>
</dbReference>
<dbReference type="BMRB" id="P57026"/>
<dbReference type="SMR" id="P57026"/>
<dbReference type="STRING" id="122586.NMB1533"/>
<dbReference type="PaxDb" id="122586-NMB1533"/>
<dbReference type="KEGG" id="nme:NMB1533"/>
<dbReference type="PATRIC" id="fig|122586.8.peg.1945"/>
<dbReference type="HOGENOM" id="CLU_112845_0_0_4"/>
<dbReference type="InParanoid" id="P57026"/>
<dbReference type="OrthoDB" id="9814063at2"/>
<dbReference type="Proteomes" id="UP000000425">
    <property type="component" value="Chromosome"/>
</dbReference>
<dbReference type="GO" id="GO:0009279">
    <property type="term" value="C:cell outer membrane"/>
    <property type="evidence" value="ECO:0007669"/>
    <property type="project" value="UniProtKB-SubCell"/>
</dbReference>
<dbReference type="GO" id="GO:0005886">
    <property type="term" value="C:plasma membrane"/>
    <property type="evidence" value="ECO:0000318"/>
    <property type="project" value="GO_Central"/>
</dbReference>
<dbReference type="GO" id="GO:0005507">
    <property type="term" value="F:copper ion binding"/>
    <property type="evidence" value="ECO:0000318"/>
    <property type="project" value="GO_Central"/>
</dbReference>
<dbReference type="GO" id="GO:0009055">
    <property type="term" value="F:electron transfer activity"/>
    <property type="evidence" value="ECO:0007669"/>
    <property type="project" value="InterPro"/>
</dbReference>
<dbReference type="CDD" id="cd13922">
    <property type="entry name" value="Azurin"/>
    <property type="match status" value="1"/>
</dbReference>
<dbReference type="Gene3D" id="2.60.40.420">
    <property type="entry name" value="Cupredoxins - blue copper proteins"/>
    <property type="match status" value="1"/>
</dbReference>
<dbReference type="InterPro" id="IPR014068">
    <property type="entry name" value="Azurin"/>
</dbReference>
<dbReference type="InterPro" id="IPR000923">
    <property type="entry name" value="BlueCu_1"/>
</dbReference>
<dbReference type="InterPro" id="IPR028871">
    <property type="entry name" value="BlueCu_1_BS"/>
</dbReference>
<dbReference type="InterPro" id="IPR050845">
    <property type="entry name" value="Cu-binding_ET"/>
</dbReference>
<dbReference type="InterPro" id="IPR008972">
    <property type="entry name" value="Cupredoxin"/>
</dbReference>
<dbReference type="NCBIfam" id="TIGR02695">
    <property type="entry name" value="azurin"/>
    <property type="match status" value="1"/>
</dbReference>
<dbReference type="PANTHER" id="PTHR38439">
    <property type="entry name" value="AURACYANIN-B"/>
    <property type="match status" value="1"/>
</dbReference>
<dbReference type="PANTHER" id="PTHR38439:SF2">
    <property type="entry name" value="OUTER MEMBRANE PROTEIN H.8"/>
    <property type="match status" value="1"/>
</dbReference>
<dbReference type="Pfam" id="PF00127">
    <property type="entry name" value="Copper-bind"/>
    <property type="match status" value="1"/>
</dbReference>
<dbReference type="SUPFAM" id="SSF49503">
    <property type="entry name" value="Cupredoxins"/>
    <property type="match status" value="1"/>
</dbReference>
<dbReference type="PROSITE" id="PS00196">
    <property type="entry name" value="COPPER_BLUE"/>
    <property type="match status" value="1"/>
</dbReference>
<dbReference type="PROSITE" id="PS51257">
    <property type="entry name" value="PROKAR_LIPOPROTEIN"/>
    <property type="match status" value="1"/>
</dbReference>
<gene>
    <name type="ordered locus">NMB1533</name>
</gene>
<sequence length="183" mass="18544">MKAYLALISAAVIGLAACSQEPAAPAAEATPAAEAPASEAPAAEAAPADAAEAPAAGNCAATVESNDNMQFNTKDIQVSKACKEFTITLKHTGTQPKASMGHNLVIAKAEDMDGVFKDGVGAADTDYVKPDDARVVAHTKLIGGGEEASLTLDPAKLADGEYKFACTFPGHGALMNGKVTLVD</sequence>
<reference key="1">
    <citation type="journal article" date="2000" name="Science">
        <title>Complete genome sequence of Neisseria meningitidis serogroup B strain MC58.</title>
        <authorList>
            <person name="Tettelin H."/>
            <person name="Saunders N.J."/>
            <person name="Heidelberg J.F."/>
            <person name="Jeffries A.C."/>
            <person name="Nelson K.E."/>
            <person name="Eisen J.A."/>
            <person name="Ketchum K.A."/>
            <person name="Hood D.W."/>
            <person name="Peden J.F."/>
            <person name="Dodson R.J."/>
            <person name="Nelson W.C."/>
            <person name="Gwinn M.L."/>
            <person name="DeBoy R.T."/>
            <person name="Peterson J.D."/>
            <person name="Hickey E.K."/>
            <person name="Haft D.H."/>
            <person name="Salzberg S.L."/>
            <person name="White O."/>
            <person name="Fleischmann R.D."/>
            <person name="Dougherty B.A."/>
            <person name="Mason T.M."/>
            <person name="Ciecko A."/>
            <person name="Parksey D.S."/>
            <person name="Blair E."/>
            <person name="Cittone H."/>
            <person name="Clark E.B."/>
            <person name="Cotton M.D."/>
            <person name="Utterback T.R."/>
            <person name="Khouri H.M."/>
            <person name="Qin H."/>
            <person name="Vamathevan J.J."/>
            <person name="Gill J."/>
            <person name="Scarlato V."/>
            <person name="Masignani V."/>
            <person name="Pizza M."/>
            <person name="Grandi G."/>
            <person name="Sun L."/>
            <person name="Smith H.O."/>
            <person name="Fraser C.M."/>
            <person name="Moxon E.R."/>
            <person name="Rappuoli R."/>
            <person name="Venter J.C."/>
        </authorList>
    </citation>
    <scope>NUCLEOTIDE SEQUENCE [LARGE SCALE GENOMIC DNA]</scope>
    <source>
        <strain>ATCC BAA-335 / MC58</strain>
    </source>
</reference>